<dbReference type="EC" id="2.1.1.67"/>
<dbReference type="EMBL" id="BC095104">
    <property type="protein sequence ID" value="AAH95104.1"/>
    <property type="molecule type" value="mRNA"/>
</dbReference>
<dbReference type="SMR" id="Q504A5"/>
<dbReference type="FunCoup" id="Q504A5">
    <property type="interactions" value="3"/>
</dbReference>
<dbReference type="STRING" id="7955.ENSDARP00000072844"/>
<dbReference type="PaxDb" id="7955-ENSDARP00000072844"/>
<dbReference type="AGR" id="ZFIN:ZDB-GENE-050522-141"/>
<dbReference type="ZFIN" id="ZDB-GENE-050522-141">
    <property type="gene designation" value="tpmt.1"/>
</dbReference>
<dbReference type="eggNOG" id="ENOG502QSF5">
    <property type="taxonomic scope" value="Eukaryota"/>
</dbReference>
<dbReference type="InParanoid" id="Q504A5"/>
<dbReference type="Reactome" id="R-DRE-156581">
    <property type="pathway name" value="Methylation"/>
</dbReference>
<dbReference type="Reactome" id="R-DRE-9748787">
    <property type="pathway name" value="Azathioprine ADME"/>
</dbReference>
<dbReference type="PRO" id="PR:Q504A5"/>
<dbReference type="Proteomes" id="UP000000437">
    <property type="component" value="Unplaced"/>
</dbReference>
<dbReference type="GO" id="GO:0005737">
    <property type="term" value="C:cytoplasm"/>
    <property type="evidence" value="ECO:0007669"/>
    <property type="project" value="UniProtKB-SubCell"/>
</dbReference>
<dbReference type="GO" id="GO:0008119">
    <property type="term" value="F:thiopurine S-methyltransferase activity"/>
    <property type="evidence" value="ECO:0000318"/>
    <property type="project" value="GO_Central"/>
</dbReference>
<dbReference type="GO" id="GO:0032259">
    <property type="term" value="P:methylation"/>
    <property type="evidence" value="ECO:0007669"/>
    <property type="project" value="UniProtKB-KW"/>
</dbReference>
<dbReference type="FunFam" id="3.40.50.150:FF:000101">
    <property type="entry name" value="Thiopurine S-methyltransferase"/>
    <property type="match status" value="1"/>
</dbReference>
<dbReference type="Gene3D" id="3.40.50.150">
    <property type="entry name" value="Vaccinia Virus protein VP39"/>
    <property type="match status" value="1"/>
</dbReference>
<dbReference type="HAMAP" id="MF_00812">
    <property type="entry name" value="Thiopur_methtran"/>
    <property type="match status" value="1"/>
</dbReference>
<dbReference type="InterPro" id="IPR029063">
    <property type="entry name" value="SAM-dependent_MTases_sf"/>
</dbReference>
<dbReference type="InterPro" id="IPR025835">
    <property type="entry name" value="Thiopurine_S-MeTrfase"/>
</dbReference>
<dbReference type="InterPro" id="IPR008854">
    <property type="entry name" value="TPMT"/>
</dbReference>
<dbReference type="PANTHER" id="PTHR10259">
    <property type="entry name" value="THIOPURINE S-METHYLTRANSFERASE"/>
    <property type="match status" value="1"/>
</dbReference>
<dbReference type="PANTHER" id="PTHR10259:SF11">
    <property type="entry name" value="THIOPURINE S-METHYLTRANSFERASE"/>
    <property type="match status" value="1"/>
</dbReference>
<dbReference type="Pfam" id="PF05724">
    <property type="entry name" value="TPMT"/>
    <property type="match status" value="1"/>
</dbReference>
<dbReference type="PIRSF" id="PIRSF023956">
    <property type="entry name" value="Thiopurine_S-methyltransferase"/>
    <property type="match status" value="1"/>
</dbReference>
<dbReference type="SUPFAM" id="SSF53335">
    <property type="entry name" value="S-adenosyl-L-methionine-dependent methyltransferases"/>
    <property type="match status" value="1"/>
</dbReference>
<dbReference type="PROSITE" id="PS51585">
    <property type="entry name" value="SAM_MT_TPMT"/>
    <property type="match status" value="1"/>
</dbReference>
<name>TPMT_DANRE</name>
<accession>Q504A5</accession>
<feature type="chain" id="PRO_0000284920" description="Probable thiopurine S-methyltransferase">
    <location>
        <begin position="1"/>
        <end position="232"/>
    </location>
</feature>
<feature type="binding site" evidence="1">
    <location>
        <begin position="14"/>
        <end position="25"/>
    </location>
    <ligand>
        <name>S-adenosyl-L-methionine</name>
        <dbReference type="ChEBI" id="CHEBI:59789"/>
    </ligand>
</feature>
<feature type="binding site" evidence="1">
    <location>
        <position position="25"/>
    </location>
    <ligand>
        <name>substrate</name>
    </ligand>
</feature>
<feature type="binding site" evidence="1">
    <location>
        <position position="54"/>
    </location>
    <ligand>
        <name>S-adenosyl-L-methionine</name>
        <dbReference type="ChEBI" id="CHEBI:59789"/>
    </ligand>
</feature>
<feature type="binding site" evidence="1">
    <location>
        <position position="75"/>
    </location>
    <ligand>
        <name>S-adenosyl-L-methionine</name>
        <dbReference type="ChEBI" id="CHEBI:59789"/>
    </ligand>
</feature>
<feature type="binding site" evidence="1">
    <location>
        <position position="137"/>
    </location>
    <ligand>
        <name>S-adenosyl-L-methionine</name>
        <dbReference type="ChEBI" id="CHEBI:59789"/>
    </ligand>
</feature>
<organism>
    <name type="scientific">Danio rerio</name>
    <name type="common">Zebrafish</name>
    <name type="synonym">Brachydanio rerio</name>
    <dbReference type="NCBI Taxonomy" id="7955"/>
    <lineage>
        <taxon>Eukaryota</taxon>
        <taxon>Metazoa</taxon>
        <taxon>Chordata</taxon>
        <taxon>Craniata</taxon>
        <taxon>Vertebrata</taxon>
        <taxon>Euteleostomi</taxon>
        <taxon>Actinopterygii</taxon>
        <taxon>Neopterygii</taxon>
        <taxon>Teleostei</taxon>
        <taxon>Ostariophysi</taxon>
        <taxon>Cypriniformes</taxon>
        <taxon>Danionidae</taxon>
        <taxon>Danioninae</taxon>
        <taxon>Danio</taxon>
    </lineage>
</organism>
<reference key="1">
    <citation type="submission" date="2005-05" db="EMBL/GenBank/DDBJ databases">
        <authorList>
            <consortium name="NIH - Zebrafish Gene Collection (ZGC) project"/>
        </authorList>
    </citation>
    <scope>NUCLEOTIDE SEQUENCE [LARGE SCALE MRNA]</scope>
    <source>
        <tissue>Eye</tissue>
    </source>
</reference>
<proteinExistence type="evidence at transcript level"/>
<evidence type="ECO:0000250" key="1"/>
<evidence type="ECO:0000250" key="2">
    <source>
        <dbReference type="UniProtKB" id="P51580"/>
    </source>
</evidence>
<evidence type="ECO:0000305" key="3"/>
<keyword id="KW-0963">Cytoplasm</keyword>
<keyword id="KW-0489">Methyltransferase</keyword>
<keyword id="KW-1185">Reference proteome</keyword>
<keyword id="KW-0949">S-adenosyl-L-methionine</keyword>
<keyword id="KW-0808">Transferase</keyword>
<protein>
    <recommendedName>
        <fullName>Probable thiopurine S-methyltransferase</fullName>
        <shortName>Thiopurine methyltransferase</shortName>
        <ecNumber>2.1.1.67</ecNumber>
    </recommendedName>
</protein>
<comment type="catalytic activity">
    <reaction evidence="2">
        <text>S-adenosyl-L-methionine + a thiopurine = S-adenosyl-L-homocysteine + a thiopurine S-methylether.</text>
        <dbReference type="EC" id="2.1.1.67"/>
    </reaction>
</comment>
<comment type="subcellular location">
    <subcellularLocation>
        <location evidence="1">Cytoplasm</location>
    </subcellularLocation>
</comment>
<comment type="similarity">
    <text evidence="3">Belongs to the class I-like SAM-binding methyltransferase superfamily. TPMT family.</text>
</comment>
<sequence length="232" mass="26334">MSAQADRVMDLSEWENRWQEGRTGFHRSDVHNLLKANVDKLICGRREVRFFFPLCGKAVDMKWLADMGHTVVGVEFSEKGIKEFSQEQNLEYNEEAVADIPGAKLFKSTDGKISIYQCDLYKFSSAVAGHFGGIWDRGALVAINPCDRQKYASLLVSLMSSDCRYLLDTLEYNPELYKGPPFFVSEDDIKTVFGGSCNIDLLQSVDGFEEKHRSWGLDSLTEKLYLLTTKTQ</sequence>
<gene>
    <name type="primary">tpmt</name>
    <name type="ORF">zgc:109981</name>
</gene>